<keyword id="KW-0436">Ligase</keyword>
<keyword id="KW-0597">Phosphoprotein</keyword>
<keyword id="KW-0662">Pyridine nucleotide biosynthesis</keyword>
<feature type="chain" id="PRO_1000129484" description="Nicotinate phosphoribosyltransferase">
    <location>
        <begin position="1"/>
        <end position="400"/>
    </location>
</feature>
<feature type="modified residue" description="Phosphohistidine; by autocatalysis" evidence="1">
    <location>
        <position position="220"/>
    </location>
</feature>
<protein>
    <recommendedName>
        <fullName evidence="1">Nicotinate phosphoribosyltransferase</fullName>
        <shortName evidence="1">NAPRTase</shortName>
        <ecNumber evidence="1">6.3.4.21</ecNumber>
    </recommendedName>
</protein>
<name>PNCB_SALEP</name>
<proteinExistence type="inferred from homology"/>
<evidence type="ECO:0000255" key="1">
    <source>
        <dbReference type="HAMAP-Rule" id="MF_00570"/>
    </source>
</evidence>
<comment type="function">
    <text evidence="1">Catalyzes the synthesis of beta-nicotinate D-ribonucleotide from nicotinate and 5-phospho-D-ribose 1-phosphate at the expense of ATP.</text>
</comment>
<comment type="catalytic activity">
    <reaction evidence="1">
        <text>nicotinate + 5-phospho-alpha-D-ribose 1-diphosphate + ATP + H2O = nicotinate beta-D-ribonucleotide + ADP + phosphate + diphosphate</text>
        <dbReference type="Rhea" id="RHEA:36163"/>
        <dbReference type="ChEBI" id="CHEBI:15377"/>
        <dbReference type="ChEBI" id="CHEBI:30616"/>
        <dbReference type="ChEBI" id="CHEBI:32544"/>
        <dbReference type="ChEBI" id="CHEBI:33019"/>
        <dbReference type="ChEBI" id="CHEBI:43474"/>
        <dbReference type="ChEBI" id="CHEBI:57502"/>
        <dbReference type="ChEBI" id="CHEBI:58017"/>
        <dbReference type="ChEBI" id="CHEBI:456216"/>
        <dbReference type="EC" id="6.3.4.21"/>
    </reaction>
</comment>
<comment type="pathway">
    <text evidence="1">Cofactor biosynthesis; NAD(+) biosynthesis; nicotinate D-ribonucleotide from nicotinate: step 1/1.</text>
</comment>
<comment type="PTM">
    <text evidence="1">Transiently phosphorylated on a His residue during the reaction cycle. Phosphorylation strongly increases the affinity for substrates and increases the rate of nicotinate D-ribonucleotide production. Dephosphorylation regenerates the low-affinity form of the enzyme, leading to product release.</text>
</comment>
<comment type="similarity">
    <text evidence="1">Belongs to the NAPRTase family.</text>
</comment>
<gene>
    <name evidence="1" type="primary">pncB</name>
    <name type="ordered locus">SEN0908</name>
</gene>
<organism>
    <name type="scientific">Salmonella enteritidis PT4 (strain P125109)</name>
    <dbReference type="NCBI Taxonomy" id="550537"/>
    <lineage>
        <taxon>Bacteria</taxon>
        <taxon>Pseudomonadati</taxon>
        <taxon>Pseudomonadota</taxon>
        <taxon>Gammaproteobacteria</taxon>
        <taxon>Enterobacterales</taxon>
        <taxon>Enterobacteriaceae</taxon>
        <taxon>Salmonella</taxon>
    </lineage>
</organism>
<dbReference type="EC" id="6.3.4.21" evidence="1"/>
<dbReference type="EMBL" id="AM933172">
    <property type="protein sequence ID" value="CAR32491.1"/>
    <property type="molecule type" value="Genomic_DNA"/>
</dbReference>
<dbReference type="RefSeq" id="WP_000191404.1">
    <property type="nucleotide sequence ID" value="NC_011294.1"/>
</dbReference>
<dbReference type="SMR" id="B5QZD8"/>
<dbReference type="KEGG" id="set:SEN0908"/>
<dbReference type="HOGENOM" id="CLU_030991_1_0_6"/>
<dbReference type="UniPathway" id="UPA00253">
    <property type="reaction ID" value="UER00457"/>
</dbReference>
<dbReference type="Proteomes" id="UP000000613">
    <property type="component" value="Chromosome"/>
</dbReference>
<dbReference type="GO" id="GO:0005829">
    <property type="term" value="C:cytosol"/>
    <property type="evidence" value="ECO:0007669"/>
    <property type="project" value="TreeGrafter"/>
</dbReference>
<dbReference type="GO" id="GO:0004516">
    <property type="term" value="F:nicotinate phosphoribosyltransferase activity"/>
    <property type="evidence" value="ECO:0007669"/>
    <property type="project" value="UniProtKB-UniRule"/>
</dbReference>
<dbReference type="GO" id="GO:0034355">
    <property type="term" value="P:NAD biosynthetic process via the salvage pathway"/>
    <property type="evidence" value="ECO:0007669"/>
    <property type="project" value="TreeGrafter"/>
</dbReference>
<dbReference type="CDD" id="cd01401">
    <property type="entry name" value="PncB_like"/>
    <property type="match status" value="1"/>
</dbReference>
<dbReference type="FunFam" id="3.20.140.10:FF:000001">
    <property type="entry name" value="Nicotinate phosphoribosyltransferase"/>
    <property type="match status" value="1"/>
</dbReference>
<dbReference type="Gene3D" id="3.20.140.10">
    <property type="entry name" value="nicotinate phosphoribosyltransferase"/>
    <property type="match status" value="1"/>
</dbReference>
<dbReference type="HAMAP" id="MF_00570">
    <property type="entry name" value="NAPRTase"/>
    <property type="match status" value="1"/>
</dbReference>
<dbReference type="InterPro" id="IPR041525">
    <property type="entry name" value="N/Namide_PRibTrfase"/>
</dbReference>
<dbReference type="InterPro" id="IPR040727">
    <property type="entry name" value="NAPRTase_N"/>
</dbReference>
<dbReference type="InterPro" id="IPR006406">
    <property type="entry name" value="Nic_PRibTrfase"/>
</dbReference>
<dbReference type="InterPro" id="IPR007229">
    <property type="entry name" value="Nic_PRibTrfase-Fam"/>
</dbReference>
<dbReference type="InterPro" id="IPR036068">
    <property type="entry name" value="Nicotinate_pribotase-like_C"/>
</dbReference>
<dbReference type="NCBIfam" id="TIGR01514">
    <property type="entry name" value="NAPRTase"/>
    <property type="match status" value="1"/>
</dbReference>
<dbReference type="NCBIfam" id="NF003704">
    <property type="entry name" value="PRK05321.1"/>
    <property type="match status" value="1"/>
</dbReference>
<dbReference type="PANTHER" id="PTHR11098">
    <property type="entry name" value="NICOTINATE PHOSPHORIBOSYLTRANSFERASE"/>
    <property type="match status" value="1"/>
</dbReference>
<dbReference type="PANTHER" id="PTHR11098:SF1">
    <property type="entry name" value="NICOTINATE PHOSPHORIBOSYLTRANSFERASE"/>
    <property type="match status" value="1"/>
</dbReference>
<dbReference type="Pfam" id="PF04095">
    <property type="entry name" value="NAPRTase"/>
    <property type="match status" value="1"/>
</dbReference>
<dbReference type="Pfam" id="PF17767">
    <property type="entry name" value="NAPRTase_N"/>
    <property type="match status" value="1"/>
</dbReference>
<dbReference type="PIRSF" id="PIRSF000484">
    <property type="entry name" value="NAPRT"/>
    <property type="match status" value="1"/>
</dbReference>
<dbReference type="SUPFAM" id="SSF51690">
    <property type="entry name" value="Nicotinate/Quinolinate PRTase C-terminal domain-like"/>
    <property type="match status" value="1"/>
</dbReference>
<dbReference type="SUPFAM" id="SSF54675">
    <property type="entry name" value="Nicotinate/Quinolinate PRTase N-terminal domain-like"/>
    <property type="match status" value="1"/>
</dbReference>
<sequence length="400" mass="45676">MTQFASPVLHSLLDTDAYKLHMQQAVFHHYYDVQVAAEFRCRGDDLLGIYADAIREQVDAMQHLRLQEDEFQWLSGLPFFKPDYLNWLREFRYNPAQVCVTNDNGKLNIRLTGPWREVIMWEVPLLAVISELVHHYRSPNAGVDQALDALESKLVDFTALTANLDMSRFHLMDFGTRRRFSREVQQAIVKRLQQESWFVGTSNYDLARRLALTPMGTQAHEWFQAHQQISPDLATSQRAALAAWLNEYPDQLGIALTDCITMDAFLRDFGIEFASRYQGLRHDSGDPVAWGEKAIAHYEKLGIDPLTKTLVFSDNLDLPKAVELYRHFASRVQLSFGIGTRLTCDIPQVKPLNIVIKLVECNGKPVAKLSDSPGKTICHDKAFVRALRKAFDLPQVRKAS</sequence>
<accession>B5QZD8</accession>
<reference key="1">
    <citation type="journal article" date="2008" name="Genome Res.">
        <title>Comparative genome analysis of Salmonella enteritidis PT4 and Salmonella gallinarum 287/91 provides insights into evolutionary and host adaptation pathways.</title>
        <authorList>
            <person name="Thomson N.R."/>
            <person name="Clayton D.J."/>
            <person name="Windhorst D."/>
            <person name="Vernikos G."/>
            <person name="Davidson S."/>
            <person name="Churcher C."/>
            <person name="Quail M.A."/>
            <person name="Stevens M."/>
            <person name="Jones M.A."/>
            <person name="Watson M."/>
            <person name="Barron A."/>
            <person name="Layton A."/>
            <person name="Pickard D."/>
            <person name="Kingsley R.A."/>
            <person name="Bignell A."/>
            <person name="Clark L."/>
            <person name="Harris B."/>
            <person name="Ormond D."/>
            <person name="Abdellah Z."/>
            <person name="Brooks K."/>
            <person name="Cherevach I."/>
            <person name="Chillingworth T."/>
            <person name="Woodward J."/>
            <person name="Norberczak H."/>
            <person name="Lord A."/>
            <person name="Arrowsmith C."/>
            <person name="Jagels K."/>
            <person name="Moule S."/>
            <person name="Mungall K."/>
            <person name="Saunders M."/>
            <person name="Whitehead S."/>
            <person name="Chabalgoity J.A."/>
            <person name="Maskell D."/>
            <person name="Humphreys T."/>
            <person name="Roberts M."/>
            <person name="Barrow P.A."/>
            <person name="Dougan G."/>
            <person name="Parkhill J."/>
        </authorList>
    </citation>
    <scope>NUCLEOTIDE SEQUENCE [LARGE SCALE GENOMIC DNA]</scope>
    <source>
        <strain>P125109</strain>
    </source>
</reference>